<organism>
    <name type="scientific">Sodalis glossinidius (strain morsitans)</name>
    <dbReference type="NCBI Taxonomy" id="343509"/>
    <lineage>
        <taxon>Bacteria</taxon>
        <taxon>Pseudomonadati</taxon>
        <taxon>Pseudomonadota</taxon>
        <taxon>Gammaproteobacteria</taxon>
        <taxon>Enterobacterales</taxon>
        <taxon>Bruguierivoracaceae</taxon>
        <taxon>Sodalis</taxon>
    </lineage>
</organism>
<keyword id="KW-0012">Acyltransferase</keyword>
<keyword id="KW-0028">Amino-acid biosynthesis</keyword>
<keyword id="KW-0963">Cytoplasm</keyword>
<keyword id="KW-0808">Transferase</keyword>
<accession>Q2NQZ8</accession>
<dbReference type="EC" id="2.3.1.-" evidence="1"/>
<dbReference type="EMBL" id="AP008232">
    <property type="protein sequence ID" value="BAE75427.1"/>
    <property type="molecule type" value="Genomic_DNA"/>
</dbReference>
<dbReference type="RefSeq" id="WP_011411964.1">
    <property type="nucleotide sequence ID" value="NC_007712.1"/>
</dbReference>
<dbReference type="SMR" id="Q2NQZ8"/>
<dbReference type="STRING" id="343509.SG2152"/>
<dbReference type="KEGG" id="sgl:SG2152"/>
<dbReference type="eggNOG" id="COG1897">
    <property type="taxonomic scope" value="Bacteria"/>
</dbReference>
<dbReference type="HOGENOM" id="CLU_057851_0_1_6"/>
<dbReference type="OrthoDB" id="9772423at2"/>
<dbReference type="BioCyc" id="SGLO343509:SGP1_RS19865-MONOMER"/>
<dbReference type="Proteomes" id="UP000001932">
    <property type="component" value="Chromosome"/>
</dbReference>
<dbReference type="GO" id="GO:0005737">
    <property type="term" value="C:cytoplasm"/>
    <property type="evidence" value="ECO:0007669"/>
    <property type="project" value="UniProtKB-SubCell"/>
</dbReference>
<dbReference type="GO" id="GO:0008899">
    <property type="term" value="F:homoserine O-succinyltransferase activity"/>
    <property type="evidence" value="ECO:0007669"/>
    <property type="project" value="InterPro"/>
</dbReference>
<dbReference type="GO" id="GO:0019281">
    <property type="term" value="P:L-methionine biosynthetic process from homoserine via O-succinyl-L-homoserine and cystathionine"/>
    <property type="evidence" value="ECO:0007669"/>
    <property type="project" value="InterPro"/>
</dbReference>
<dbReference type="CDD" id="cd03131">
    <property type="entry name" value="GATase1_HTS"/>
    <property type="match status" value="1"/>
</dbReference>
<dbReference type="FunFam" id="3.40.50.880:FF:000004">
    <property type="entry name" value="Homoserine O-succinyltransferase"/>
    <property type="match status" value="1"/>
</dbReference>
<dbReference type="Gene3D" id="3.40.50.880">
    <property type="match status" value="1"/>
</dbReference>
<dbReference type="HAMAP" id="MF_00295">
    <property type="entry name" value="MetA_acyltransf"/>
    <property type="match status" value="1"/>
</dbReference>
<dbReference type="InterPro" id="IPR029062">
    <property type="entry name" value="Class_I_gatase-like"/>
</dbReference>
<dbReference type="InterPro" id="IPR005697">
    <property type="entry name" value="HST_MetA"/>
</dbReference>
<dbReference type="InterPro" id="IPR033752">
    <property type="entry name" value="MetA_family"/>
</dbReference>
<dbReference type="NCBIfam" id="TIGR01001">
    <property type="entry name" value="metA"/>
    <property type="match status" value="1"/>
</dbReference>
<dbReference type="PANTHER" id="PTHR20919">
    <property type="entry name" value="HOMOSERINE O-SUCCINYLTRANSFERASE"/>
    <property type="match status" value="1"/>
</dbReference>
<dbReference type="PANTHER" id="PTHR20919:SF0">
    <property type="entry name" value="HOMOSERINE O-SUCCINYLTRANSFERASE"/>
    <property type="match status" value="1"/>
</dbReference>
<dbReference type="Pfam" id="PF04204">
    <property type="entry name" value="HTS"/>
    <property type="match status" value="1"/>
</dbReference>
<dbReference type="PIRSF" id="PIRSF000450">
    <property type="entry name" value="H_ser_succinyltr"/>
    <property type="match status" value="1"/>
</dbReference>
<dbReference type="SUPFAM" id="SSF52317">
    <property type="entry name" value="Class I glutamine amidotransferase-like"/>
    <property type="match status" value="1"/>
</dbReference>
<gene>
    <name type="primary">metA</name>
    <name type="ordered locus">SG2152</name>
</gene>
<reference key="1">
    <citation type="journal article" date="2006" name="Genome Res.">
        <title>Massive genome erosion and functional adaptations provide insights into the symbiotic lifestyle of Sodalis glossinidius in the tsetse host.</title>
        <authorList>
            <person name="Toh H."/>
            <person name="Weiss B.L."/>
            <person name="Perkin S.A.H."/>
            <person name="Yamashita A."/>
            <person name="Oshima K."/>
            <person name="Hattori M."/>
            <person name="Aksoy S."/>
        </authorList>
    </citation>
    <scope>NUCLEOTIDE SEQUENCE [LARGE SCALE GENOMIC DNA]</scope>
    <source>
        <strain>morsitans</strain>
    </source>
</reference>
<protein>
    <recommendedName>
        <fullName evidence="1">Probable acyltransferase</fullName>
        <ecNumber evidence="1">2.3.1.-</ecNumber>
    </recommendedName>
</protein>
<proteinExistence type="inferred from homology"/>
<name>META_SODGM</name>
<comment type="subcellular location">
    <subcellularLocation>
        <location evidence="1">Cytoplasm</location>
    </subcellularLocation>
</comment>
<comment type="similarity">
    <text evidence="1">Belongs to the MetA family.</text>
</comment>
<evidence type="ECO:0000255" key="1">
    <source>
        <dbReference type="HAMAP-Rule" id="MF_00295"/>
    </source>
</evidence>
<feature type="chain" id="PRO_1000021849" description="Probable acyltransferase">
    <location>
        <begin position="1"/>
        <end position="309"/>
    </location>
</feature>
<feature type="active site" description="Acyl-thioester intermediate" evidence="1">
    <location>
        <position position="142"/>
    </location>
</feature>
<feature type="active site" description="Proton acceptor" evidence="1">
    <location>
        <position position="235"/>
    </location>
</feature>
<feature type="active site" evidence="1">
    <location>
        <position position="237"/>
    </location>
</feature>
<feature type="binding site" evidence="1">
    <location>
        <position position="163"/>
    </location>
    <ligand>
        <name>substrate</name>
    </ligand>
</feature>
<feature type="binding site" evidence="1">
    <location>
        <position position="192"/>
    </location>
    <ligand>
        <name>substrate</name>
    </ligand>
</feature>
<feature type="binding site" evidence="1">
    <location>
        <position position="249"/>
    </location>
    <ligand>
        <name>substrate</name>
    </ligand>
</feature>
<feature type="site" description="Important for substrate specificity" evidence="1">
    <location>
        <position position="192"/>
    </location>
</feature>
<sequence length="309" mass="35704">MPIRVFDELPAVNFLRNENVFVMTSSRASTQEIRSLKVLILNLMPKKIETENQFLRLLSNSPLQVDIQLLRIDSRESKNTPAEHLNNFYCNFEDIQHDNFDGLVVTGAPLSLVDFHDVVFWPQIDRVLHWARDHVTSTLFVCWAVQAALNILYGIPKMTRQQKLAGVYQHHLLKPHALLTRGFDETFLAPHSRNADFPTAMIRQHTDLEILAESDEAGAYLFASHDKRLAFVTGHPEYDALTLASEYHRDRENGLNPSLPVNYFLQDNPDLTPKASWRSHGHLLVANWLNYYVYQITPYDLRRMNPTLE</sequence>